<reference key="1">
    <citation type="journal article" date="2005" name="Genome Res.">
        <title>Comparative genome sequencing of Drosophila pseudoobscura: chromosomal, gene, and cis-element evolution.</title>
        <authorList>
            <person name="Richards S."/>
            <person name="Liu Y."/>
            <person name="Bettencourt B.R."/>
            <person name="Hradecky P."/>
            <person name="Letovsky S."/>
            <person name="Nielsen R."/>
            <person name="Thornton K."/>
            <person name="Hubisz M.J."/>
            <person name="Chen R."/>
            <person name="Meisel R.P."/>
            <person name="Couronne O."/>
            <person name="Hua S."/>
            <person name="Smith M.A."/>
            <person name="Zhang P."/>
            <person name="Liu J."/>
            <person name="Bussemaker H.J."/>
            <person name="van Batenburg M.F."/>
            <person name="Howells S.L."/>
            <person name="Scherer S.E."/>
            <person name="Sodergren E."/>
            <person name="Matthews B.B."/>
            <person name="Crosby M.A."/>
            <person name="Schroeder A.J."/>
            <person name="Ortiz-Barrientos D."/>
            <person name="Rives C.M."/>
            <person name="Metzker M.L."/>
            <person name="Muzny D.M."/>
            <person name="Scott G."/>
            <person name="Steffen D."/>
            <person name="Wheeler D.A."/>
            <person name="Worley K.C."/>
            <person name="Havlak P."/>
            <person name="Durbin K.J."/>
            <person name="Egan A."/>
            <person name="Gill R."/>
            <person name="Hume J."/>
            <person name="Morgan M.B."/>
            <person name="Miner G."/>
            <person name="Hamilton C."/>
            <person name="Huang Y."/>
            <person name="Waldron L."/>
            <person name="Verduzco D."/>
            <person name="Clerc-Blankenburg K.P."/>
            <person name="Dubchak I."/>
            <person name="Noor M.A.F."/>
            <person name="Anderson W."/>
            <person name="White K.P."/>
            <person name="Clark A.G."/>
            <person name="Schaeffer S.W."/>
            <person name="Gelbart W.M."/>
            <person name="Weinstock G.M."/>
            <person name="Gibbs R.A."/>
        </authorList>
    </citation>
    <scope>NUCLEOTIDE SEQUENCE [LARGE SCALE GENOMIC DNA]</scope>
    <source>
        <strain>MV2-25 / Tucson 14011-0121.94</strain>
    </source>
</reference>
<gene>
    <name type="ORF">GA10450</name>
</gene>
<name>GTPBA_DROPS</name>
<feature type="chain" id="PRO_0000312636" description="GTP-binding protein 10 homolog">
    <location>
        <begin position="1"/>
        <end position="383"/>
    </location>
</feature>
<feature type="domain" description="Obg" evidence="2">
    <location>
        <begin position="22"/>
        <end position="157"/>
    </location>
</feature>
<feature type="domain" description="OBG-type G" evidence="1">
    <location>
        <begin position="158"/>
        <end position="353"/>
    </location>
</feature>
<feature type="binding site" evidence="1">
    <location>
        <begin position="164"/>
        <end position="171"/>
    </location>
    <ligand>
        <name>GTP</name>
        <dbReference type="ChEBI" id="CHEBI:37565"/>
    </ligand>
</feature>
<feature type="binding site" evidence="1">
    <location>
        <begin position="211"/>
        <end position="215"/>
    </location>
    <ligand>
        <name>GTP</name>
        <dbReference type="ChEBI" id="CHEBI:37565"/>
    </ligand>
</feature>
<feature type="binding site" evidence="1">
    <location>
        <begin position="287"/>
        <end position="290"/>
    </location>
    <ligand>
        <name>GTP</name>
        <dbReference type="ChEBI" id="CHEBI:37565"/>
    </ligand>
</feature>
<evidence type="ECO:0000255" key="1">
    <source>
        <dbReference type="PROSITE-ProRule" id="PRU01047"/>
    </source>
</evidence>
<evidence type="ECO:0000255" key="2">
    <source>
        <dbReference type="PROSITE-ProRule" id="PRU01231"/>
    </source>
</evidence>
<evidence type="ECO:0000305" key="3"/>
<dbReference type="EMBL" id="CH379062">
    <property type="protein sequence ID" value="EAL32805.1"/>
    <property type="molecule type" value="Genomic_DNA"/>
</dbReference>
<dbReference type="RefSeq" id="XP_001355746.1">
    <property type="nucleotide sequence ID" value="XM_001355710.3"/>
</dbReference>
<dbReference type="SMR" id="Q29K06"/>
<dbReference type="FunCoup" id="Q29K06">
    <property type="interactions" value="979"/>
</dbReference>
<dbReference type="STRING" id="46245.Q29K06"/>
<dbReference type="EnsemblMetazoa" id="FBtr0287287">
    <property type="protein sequence ID" value="FBpp0285725"/>
    <property type="gene ID" value="FBgn0070507"/>
</dbReference>
<dbReference type="KEGG" id="dpo:4816147"/>
<dbReference type="eggNOG" id="KOG1489">
    <property type="taxonomic scope" value="Eukaryota"/>
</dbReference>
<dbReference type="HOGENOM" id="CLU_011747_2_3_1"/>
<dbReference type="InParanoid" id="Q29K06"/>
<dbReference type="OMA" id="VFMVDIF"/>
<dbReference type="PhylomeDB" id="Q29K06"/>
<dbReference type="Proteomes" id="UP000001819">
    <property type="component" value="Chromosome 4"/>
</dbReference>
<dbReference type="Bgee" id="FBgn0070507">
    <property type="expression patterns" value="Expressed in female reproductive system and 2 other cell types or tissues"/>
</dbReference>
<dbReference type="GO" id="GO:0005739">
    <property type="term" value="C:mitochondrion"/>
    <property type="evidence" value="ECO:0007669"/>
    <property type="project" value="TreeGrafter"/>
</dbReference>
<dbReference type="GO" id="GO:0005730">
    <property type="term" value="C:nucleolus"/>
    <property type="evidence" value="ECO:0007669"/>
    <property type="project" value="UniProtKB-SubCell"/>
</dbReference>
<dbReference type="GO" id="GO:0005525">
    <property type="term" value="F:GTP binding"/>
    <property type="evidence" value="ECO:0007669"/>
    <property type="project" value="UniProtKB-KW"/>
</dbReference>
<dbReference type="GO" id="GO:0003924">
    <property type="term" value="F:GTPase activity"/>
    <property type="evidence" value="ECO:0007669"/>
    <property type="project" value="InterPro"/>
</dbReference>
<dbReference type="GO" id="GO:0000287">
    <property type="term" value="F:magnesium ion binding"/>
    <property type="evidence" value="ECO:0007669"/>
    <property type="project" value="InterPro"/>
</dbReference>
<dbReference type="GO" id="GO:0042254">
    <property type="term" value="P:ribosome biogenesis"/>
    <property type="evidence" value="ECO:0007669"/>
    <property type="project" value="UniProtKB-KW"/>
</dbReference>
<dbReference type="CDD" id="cd01898">
    <property type="entry name" value="Obg"/>
    <property type="match status" value="1"/>
</dbReference>
<dbReference type="Gene3D" id="2.70.210.12">
    <property type="entry name" value="GTP1/OBG domain"/>
    <property type="match status" value="1"/>
</dbReference>
<dbReference type="Gene3D" id="3.40.50.300">
    <property type="entry name" value="P-loop containing nucleotide triphosphate hydrolases"/>
    <property type="match status" value="1"/>
</dbReference>
<dbReference type="InterPro" id="IPR031167">
    <property type="entry name" value="G_OBG"/>
</dbReference>
<dbReference type="InterPro" id="IPR006073">
    <property type="entry name" value="GTP-bd"/>
</dbReference>
<dbReference type="InterPro" id="IPR014100">
    <property type="entry name" value="GTP-bd_Obg/CgtA"/>
</dbReference>
<dbReference type="InterPro" id="IPR006169">
    <property type="entry name" value="GTP1_OBG_dom"/>
</dbReference>
<dbReference type="InterPro" id="IPR036726">
    <property type="entry name" value="GTP1_OBG_dom_sf"/>
</dbReference>
<dbReference type="InterPro" id="IPR045086">
    <property type="entry name" value="OBG_GTPase"/>
</dbReference>
<dbReference type="InterPro" id="IPR027417">
    <property type="entry name" value="P-loop_NTPase"/>
</dbReference>
<dbReference type="PANTHER" id="PTHR11702">
    <property type="entry name" value="DEVELOPMENTALLY REGULATED GTP-BINDING PROTEIN-RELATED"/>
    <property type="match status" value="1"/>
</dbReference>
<dbReference type="PANTHER" id="PTHR11702:SF43">
    <property type="entry name" value="GTP-BINDING PROTEIN 10"/>
    <property type="match status" value="1"/>
</dbReference>
<dbReference type="Pfam" id="PF01018">
    <property type="entry name" value="GTP1_OBG"/>
    <property type="match status" value="1"/>
</dbReference>
<dbReference type="Pfam" id="PF01926">
    <property type="entry name" value="MMR_HSR1"/>
    <property type="match status" value="1"/>
</dbReference>
<dbReference type="PIRSF" id="PIRSF002401">
    <property type="entry name" value="GTP_bd_Obg/CgtA"/>
    <property type="match status" value="1"/>
</dbReference>
<dbReference type="PRINTS" id="PR00326">
    <property type="entry name" value="GTP1OBG"/>
</dbReference>
<dbReference type="SUPFAM" id="SSF82051">
    <property type="entry name" value="Obg GTP-binding protein N-terminal domain"/>
    <property type="match status" value="1"/>
</dbReference>
<dbReference type="SUPFAM" id="SSF52540">
    <property type="entry name" value="P-loop containing nucleoside triphosphate hydrolases"/>
    <property type="match status" value="1"/>
</dbReference>
<dbReference type="PROSITE" id="PS51710">
    <property type="entry name" value="G_OBG"/>
    <property type="match status" value="1"/>
</dbReference>
<dbReference type="PROSITE" id="PS51883">
    <property type="entry name" value="OBG"/>
    <property type="match status" value="1"/>
</dbReference>
<comment type="function">
    <text>May be involved in the ribosome maturation process.</text>
</comment>
<comment type="subcellular location">
    <subcellularLocation>
        <location evidence="3">Nucleus</location>
        <location evidence="3">Nucleolus</location>
    </subcellularLocation>
</comment>
<comment type="similarity">
    <text evidence="1">Belongs to the TRAFAC class OBG-HflX-like GTPase superfamily. OBG GTPase family.</text>
</comment>
<protein>
    <recommendedName>
        <fullName>GTP-binding protein 10 homolog</fullName>
    </recommendedName>
</protein>
<proteinExistence type="inferred from homology"/>
<keyword id="KW-0342">GTP-binding</keyword>
<keyword id="KW-0547">Nucleotide-binding</keyword>
<keyword id="KW-0539">Nucleus</keyword>
<keyword id="KW-1185">Reference proteome</keyword>
<keyword id="KW-0690">Ribosome biogenesis</keyword>
<sequence length="383" mass="41846">MVQIFKFLLKSNKSPARAHFRPSFLDTLRLAVRGGHGGNGLPKYGGVGGQGGCVYFVAKEGLTLRKMAQGLKDRRVAASSGEDSSKVSIFGKRGVDTRIEVPVGVQVYDEQQKLLADLNENDAKCIVAGGGTGGCTGNNFLGRPGENRIVNLDLKLIADVGLVGFPNAGKSTLLKAVSNAKPKIAAYPFTTIRPQIGTIEYGDLRSISLADLPGLIEGAHANFGMGHKFLKHIERTRLLLFMVDIFGFQLSPRHPHRDCLANIYSLNKELELYDPSLLEKPCVLLLNKMDKEGAHDILTKVKPIIDDLSSGLADCPEEVRPKRVLKFESIVPISAINSTRVTQVKSQLRRTLVRLAEKQFVSDGEQIKEQLQQRVGLVGPRIT</sequence>
<organism>
    <name type="scientific">Drosophila pseudoobscura pseudoobscura</name>
    <name type="common">Fruit fly</name>
    <dbReference type="NCBI Taxonomy" id="46245"/>
    <lineage>
        <taxon>Eukaryota</taxon>
        <taxon>Metazoa</taxon>
        <taxon>Ecdysozoa</taxon>
        <taxon>Arthropoda</taxon>
        <taxon>Hexapoda</taxon>
        <taxon>Insecta</taxon>
        <taxon>Pterygota</taxon>
        <taxon>Neoptera</taxon>
        <taxon>Endopterygota</taxon>
        <taxon>Diptera</taxon>
        <taxon>Brachycera</taxon>
        <taxon>Muscomorpha</taxon>
        <taxon>Ephydroidea</taxon>
        <taxon>Drosophilidae</taxon>
        <taxon>Drosophila</taxon>
        <taxon>Sophophora</taxon>
    </lineage>
</organism>
<accession>Q29K06</accession>